<protein>
    <recommendedName>
        <fullName>Eukaryotic translation initiation factor 4E-4</fullName>
        <shortName>eIF-4E-4</shortName>
        <shortName>eIF4E-4</shortName>
    </recommendedName>
    <alternativeName>
        <fullName>eIF-4F 25 kDa subunit</fullName>
    </alternativeName>
    <alternativeName>
        <fullName>mRNA cap-binding protein</fullName>
    </alternativeName>
</protein>
<name>IF4E4_CAEEL</name>
<sequence>MEAETSTQEVVKQVKNLPILMEDAPVGSDDHQLQYSYTFSYFMRPTGKFDPEDYASYVQPVGIMKSVEQFWSIMVHFKRPTEMCDKADIHFFKTGVKPVWEDPANCKGGKWIIRLKKGLSTRIWENLLMAIIGEQFLVGDELCGAVCSIRNQEDIISLWNRNADDTPVTNRIRETLRSVLQLPQNTVLEYKRHDDCLRDQSSYRHTTKNICK</sequence>
<feature type="chain" id="PRO_0000193646" description="Eukaryotic translation initiation factor 4E-4">
    <location>
        <begin position="1"/>
        <end position="212"/>
    </location>
</feature>
<feature type="disulfide bond" evidence="1">
    <location>
        <begin position="143"/>
        <end position="147"/>
    </location>
</feature>
<organism>
    <name type="scientific">Caenorhabditis elegans</name>
    <dbReference type="NCBI Taxonomy" id="6239"/>
    <lineage>
        <taxon>Eukaryota</taxon>
        <taxon>Metazoa</taxon>
        <taxon>Ecdysozoa</taxon>
        <taxon>Nematoda</taxon>
        <taxon>Chromadorea</taxon>
        <taxon>Rhabditida</taxon>
        <taxon>Rhabditina</taxon>
        <taxon>Rhabditomorpha</taxon>
        <taxon>Rhabditoidea</taxon>
        <taxon>Rhabditidae</taxon>
        <taxon>Peloderinae</taxon>
        <taxon>Caenorhabditis</taxon>
    </lineage>
</organism>
<dbReference type="EMBL" id="AF214651">
    <property type="protein sequence ID" value="AAF62414.1"/>
    <property type="molecule type" value="mRNA"/>
</dbReference>
<dbReference type="EMBL" id="FO080359">
    <property type="protein sequence ID" value="CCD63145.1"/>
    <property type="molecule type" value="Genomic_DNA"/>
</dbReference>
<dbReference type="PIR" id="T31058">
    <property type="entry name" value="T31058"/>
</dbReference>
<dbReference type="RefSeq" id="NP_508210.1">
    <property type="nucleotide sequence ID" value="NM_075809.5"/>
</dbReference>
<dbReference type="SMR" id="Q22888"/>
<dbReference type="BioGRID" id="45417">
    <property type="interactions" value="8"/>
</dbReference>
<dbReference type="FunCoup" id="Q22888">
    <property type="interactions" value="2941"/>
</dbReference>
<dbReference type="STRING" id="6239.C05D9.5.1"/>
<dbReference type="PaxDb" id="6239-C05D9.5"/>
<dbReference type="PeptideAtlas" id="Q22888"/>
<dbReference type="EnsemblMetazoa" id="C05D9.5.1">
    <property type="protein sequence ID" value="C05D9.5.1"/>
    <property type="gene ID" value="WBGene00002062"/>
</dbReference>
<dbReference type="GeneID" id="180464"/>
<dbReference type="KEGG" id="cel:CELE_C05D9.5"/>
<dbReference type="UCSC" id="C05D9.5">
    <property type="organism name" value="c. elegans"/>
</dbReference>
<dbReference type="AGR" id="WB:WBGene00002062"/>
<dbReference type="CTD" id="180464"/>
<dbReference type="WormBase" id="C05D9.5">
    <property type="protein sequence ID" value="CE07931"/>
    <property type="gene ID" value="WBGene00002062"/>
    <property type="gene designation" value="ife-4"/>
</dbReference>
<dbReference type="eggNOG" id="KOG1669">
    <property type="taxonomic scope" value="Eukaryota"/>
</dbReference>
<dbReference type="GeneTree" id="ENSGT00940000174225"/>
<dbReference type="HOGENOM" id="CLU_043552_3_3_1"/>
<dbReference type="InParanoid" id="Q22888"/>
<dbReference type="OMA" id="VWNKTAN"/>
<dbReference type="OrthoDB" id="590761at2759"/>
<dbReference type="PhylomeDB" id="Q22888"/>
<dbReference type="Reactome" id="R-CEL-1169408">
    <property type="pathway name" value="ISG15 antiviral mechanism"/>
</dbReference>
<dbReference type="PRO" id="PR:Q22888"/>
<dbReference type="Proteomes" id="UP000001940">
    <property type="component" value="Chromosome X"/>
</dbReference>
<dbReference type="Bgee" id="WBGene00002062">
    <property type="expression patterns" value="Expressed in pharyngeal muscle cell (C elegans) and 4 other cell types or tissues"/>
</dbReference>
<dbReference type="GO" id="GO:0016281">
    <property type="term" value="C:eukaryotic translation initiation factor 4F complex"/>
    <property type="evidence" value="ECO:0000318"/>
    <property type="project" value="GO_Central"/>
</dbReference>
<dbReference type="GO" id="GO:0000340">
    <property type="term" value="F:RNA 7-methylguanosine cap binding"/>
    <property type="evidence" value="ECO:0000314"/>
    <property type="project" value="WormBase"/>
</dbReference>
<dbReference type="GO" id="GO:0003743">
    <property type="term" value="F:translation initiation factor activity"/>
    <property type="evidence" value="ECO:0000318"/>
    <property type="project" value="GO_Central"/>
</dbReference>
<dbReference type="GO" id="GO:0006417">
    <property type="term" value="P:regulation of translation"/>
    <property type="evidence" value="ECO:0007669"/>
    <property type="project" value="UniProtKB-KW"/>
</dbReference>
<dbReference type="GO" id="GO:0006413">
    <property type="term" value="P:translational initiation"/>
    <property type="evidence" value="ECO:0000318"/>
    <property type="project" value="GO_Central"/>
</dbReference>
<dbReference type="FunFam" id="3.30.760.10:FF:000014">
    <property type="entry name" value="Eukaryotic translation initiation factor 4E-4"/>
    <property type="match status" value="1"/>
</dbReference>
<dbReference type="Gene3D" id="3.30.760.10">
    <property type="entry name" value="RNA Cap, Translation Initiation Factor Eif4e"/>
    <property type="match status" value="1"/>
</dbReference>
<dbReference type="InterPro" id="IPR023398">
    <property type="entry name" value="TIF_eIF4e-like"/>
</dbReference>
<dbReference type="InterPro" id="IPR001040">
    <property type="entry name" value="TIF_eIF_4E"/>
</dbReference>
<dbReference type="InterPro" id="IPR019770">
    <property type="entry name" value="TIF_eIF_4E_CS"/>
</dbReference>
<dbReference type="PANTHER" id="PTHR11960:SF18">
    <property type="entry name" value="EUKARYOTIC TRANSLATION INITIATION FACTOR 4E HOMOLOGOUS PROTEIN, ISOFORM B"/>
    <property type="match status" value="1"/>
</dbReference>
<dbReference type="PANTHER" id="PTHR11960">
    <property type="entry name" value="EUKARYOTIC TRANSLATION INITIATION FACTOR 4E RELATED"/>
    <property type="match status" value="1"/>
</dbReference>
<dbReference type="Pfam" id="PF01652">
    <property type="entry name" value="IF4E"/>
    <property type="match status" value="1"/>
</dbReference>
<dbReference type="SUPFAM" id="SSF55418">
    <property type="entry name" value="eIF4e-like"/>
    <property type="match status" value="1"/>
</dbReference>
<dbReference type="PROSITE" id="PS00813">
    <property type="entry name" value="IF4E"/>
    <property type="match status" value="1"/>
</dbReference>
<reference key="1">
    <citation type="journal article" date="2000" name="J. Biol. Chem.">
        <title>Functional characterization of five eIF4E isoforms in Caenorhabditis elegans.</title>
        <authorList>
            <person name="Keiper B.D."/>
            <person name="Lamphear B.J."/>
            <person name="Deshpande A.M."/>
            <person name="Jankowska-Anyszka M."/>
            <person name="Aamodt E.J."/>
            <person name="Blumenthal T."/>
            <person name="Rhoads R.E."/>
        </authorList>
    </citation>
    <scope>NUCLEOTIDE SEQUENCE [MRNA]</scope>
    <scope>FUNCTION</scope>
    <source>
        <strain>Bristol N2</strain>
    </source>
</reference>
<reference key="2">
    <citation type="journal article" date="1998" name="Science">
        <title>Genome sequence of the nematode C. elegans: a platform for investigating biology.</title>
        <authorList>
            <consortium name="The C. elegans sequencing consortium"/>
        </authorList>
    </citation>
    <scope>NUCLEOTIDE SEQUENCE [LARGE SCALE GENOMIC DNA]</scope>
    <source>
        <strain>Bristol N2</strain>
    </source>
</reference>
<reference key="3">
    <citation type="journal article" date="2001" name="Development">
        <title>An isoform of eIF4E is a component of germ granules and is required for spermatogenesis in C. elegans.</title>
        <authorList>
            <person name="Amiri A."/>
            <person name="Keiper B.D."/>
            <person name="Kawasaki I."/>
            <person name="Fan Y."/>
            <person name="Kohara Y."/>
            <person name="Rhoads R.E."/>
            <person name="Strome S."/>
        </authorList>
    </citation>
    <scope>TISSUE SPECIFICITY</scope>
    <source>
        <strain>Bristol N2</strain>
    </source>
</reference>
<reference key="4">
    <citation type="journal article" date="2002" name="Acta Biochim. Pol.">
        <title>Interaction of three Caenorhabditis elegans isoforms of translation initiation factor eIF4E with mono- and trimethylated mRNA 5' cap analogues.</title>
        <authorList>
            <person name="Stachelska A."/>
            <person name="Wieczorek Z."/>
            <person name="Ruszczynska K."/>
            <person name="Stolarski R."/>
            <person name="Pietrzak M."/>
            <person name="Lamphear B.J."/>
            <person name="Rhoads R.E."/>
            <person name="Darzynkiewicz E."/>
            <person name="Jankowska-Anyszka M."/>
        </authorList>
    </citation>
    <scope>FUNCTION</scope>
</reference>
<keyword id="KW-1015">Disulfide bond</keyword>
<keyword id="KW-0396">Initiation factor</keyword>
<keyword id="KW-0648">Protein biosynthesis</keyword>
<keyword id="KW-1185">Reference proteome</keyword>
<keyword id="KW-0694">RNA-binding</keyword>
<keyword id="KW-0810">Translation regulation</keyword>
<proteinExistence type="evidence at transcript level"/>
<accession>Q22888</accession>
<comment type="function">
    <text evidence="2 4">Recognizes and binds the 7-methylguanosine-containing mRNA cap during an early step in the initiation of protein synthesis and facilitates ribosome binding by inducing the unwinding of the mRNAs secondary structures. All 5 eIF4E proteins bind monomethyl cap structures. Only ife-1, ife-2 and ife-5 bind trimethyl cap structures which result from trans-splicing. Translation of trimethyl cap structure mRNAs may be regulated by intracellular redox state; disulfide bonds change the width and depth of the cap-binding cavity determining selectivity to mRNA caps.</text>
</comment>
<comment type="subunit">
    <text>eIF4F is a multi-subunit complex, the composition of which varies with external and internal environmental conditions. It is composed of at least eIF4A, eIF4E and eIF4G. eIF4E is also known to interact with other partners.</text>
</comment>
<comment type="tissue specificity">
    <text evidence="3">Enriched in somatic cells.</text>
</comment>
<comment type="miscellaneous">
    <text>Completely dispensible; null mutations have no effect on worm.</text>
</comment>
<comment type="similarity">
    <text evidence="5">Belongs to the eukaryotic initiation factor 4E family.</text>
</comment>
<gene>
    <name type="primary">ife-4</name>
    <name type="ORF">C05D9.5</name>
</gene>
<evidence type="ECO:0000250" key="1"/>
<evidence type="ECO:0000269" key="2">
    <source>
    </source>
</evidence>
<evidence type="ECO:0000269" key="3">
    <source>
    </source>
</evidence>
<evidence type="ECO:0000269" key="4">
    <source>
    </source>
</evidence>
<evidence type="ECO:0000305" key="5"/>